<dbReference type="EMBL" id="AP009153">
    <property type="protein sequence ID" value="BAH39376.1"/>
    <property type="molecule type" value="Genomic_DNA"/>
</dbReference>
<dbReference type="RefSeq" id="WP_015894145.1">
    <property type="nucleotide sequence ID" value="NC_012489.1"/>
</dbReference>
<dbReference type="SMR" id="C1AAX0"/>
<dbReference type="STRING" id="379066.GAU_2334"/>
<dbReference type="KEGG" id="gau:GAU_2334"/>
<dbReference type="eggNOG" id="COG0228">
    <property type="taxonomic scope" value="Bacteria"/>
</dbReference>
<dbReference type="HOGENOM" id="CLU_100590_5_0_0"/>
<dbReference type="OrthoDB" id="9807878at2"/>
<dbReference type="Proteomes" id="UP000002209">
    <property type="component" value="Chromosome"/>
</dbReference>
<dbReference type="GO" id="GO:0005737">
    <property type="term" value="C:cytoplasm"/>
    <property type="evidence" value="ECO:0007669"/>
    <property type="project" value="UniProtKB-ARBA"/>
</dbReference>
<dbReference type="GO" id="GO:0015935">
    <property type="term" value="C:small ribosomal subunit"/>
    <property type="evidence" value="ECO:0007669"/>
    <property type="project" value="TreeGrafter"/>
</dbReference>
<dbReference type="GO" id="GO:0003735">
    <property type="term" value="F:structural constituent of ribosome"/>
    <property type="evidence" value="ECO:0007669"/>
    <property type="project" value="InterPro"/>
</dbReference>
<dbReference type="GO" id="GO:0006412">
    <property type="term" value="P:translation"/>
    <property type="evidence" value="ECO:0007669"/>
    <property type="project" value="UniProtKB-UniRule"/>
</dbReference>
<dbReference type="Gene3D" id="3.30.1320.10">
    <property type="match status" value="1"/>
</dbReference>
<dbReference type="HAMAP" id="MF_00385">
    <property type="entry name" value="Ribosomal_bS16"/>
    <property type="match status" value="1"/>
</dbReference>
<dbReference type="InterPro" id="IPR000307">
    <property type="entry name" value="Ribosomal_bS16"/>
</dbReference>
<dbReference type="InterPro" id="IPR023803">
    <property type="entry name" value="Ribosomal_bS16_dom_sf"/>
</dbReference>
<dbReference type="NCBIfam" id="TIGR00002">
    <property type="entry name" value="S16"/>
    <property type="match status" value="1"/>
</dbReference>
<dbReference type="PANTHER" id="PTHR12919">
    <property type="entry name" value="30S RIBOSOMAL PROTEIN S16"/>
    <property type="match status" value="1"/>
</dbReference>
<dbReference type="PANTHER" id="PTHR12919:SF20">
    <property type="entry name" value="SMALL RIBOSOMAL SUBUNIT PROTEIN BS16M"/>
    <property type="match status" value="1"/>
</dbReference>
<dbReference type="Pfam" id="PF00886">
    <property type="entry name" value="Ribosomal_S16"/>
    <property type="match status" value="1"/>
</dbReference>
<dbReference type="SUPFAM" id="SSF54565">
    <property type="entry name" value="Ribosomal protein S16"/>
    <property type="match status" value="1"/>
</dbReference>
<evidence type="ECO:0000255" key="1">
    <source>
        <dbReference type="HAMAP-Rule" id="MF_00385"/>
    </source>
</evidence>
<evidence type="ECO:0000305" key="2"/>
<keyword id="KW-1185">Reference proteome</keyword>
<keyword id="KW-0687">Ribonucleoprotein</keyword>
<keyword id="KW-0689">Ribosomal protein</keyword>
<sequence length="104" mass="11463">MAVKIRLRREGRKKTPMYRIVVADSKAPRDGRFIEILGQYQPRGGENAIALKADRVNHWLNVGALPTDTVRSLLRRAGILKARHEARLAAKLQAAAVALPSGEA</sequence>
<accession>C1AAX0</accession>
<name>RS16_GEMAT</name>
<protein>
    <recommendedName>
        <fullName evidence="1">Small ribosomal subunit protein bS16</fullName>
    </recommendedName>
    <alternativeName>
        <fullName evidence="2">30S ribosomal protein S16</fullName>
    </alternativeName>
</protein>
<organism>
    <name type="scientific">Gemmatimonas aurantiaca (strain DSM 14586 / JCM 11422 / NBRC 100505 / T-27)</name>
    <dbReference type="NCBI Taxonomy" id="379066"/>
    <lineage>
        <taxon>Bacteria</taxon>
        <taxon>Pseudomonadati</taxon>
        <taxon>Gemmatimonadota</taxon>
        <taxon>Gemmatimonadia</taxon>
        <taxon>Gemmatimonadales</taxon>
        <taxon>Gemmatimonadaceae</taxon>
        <taxon>Gemmatimonas</taxon>
    </lineage>
</organism>
<feature type="chain" id="PRO_1000205761" description="Small ribosomal subunit protein bS16">
    <location>
        <begin position="1"/>
        <end position="104"/>
    </location>
</feature>
<comment type="similarity">
    <text evidence="1">Belongs to the bacterial ribosomal protein bS16 family.</text>
</comment>
<proteinExistence type="inferred from homology"/>
<reference key="1">
    <citation type="submission" date="2006-03" db="EMBL/GenBank/DDBJ databases">
        <title>Complete genome sequence of Gemmatimonas aurantiaca T-27 that represents a novel phylum Gemmatimonadetes.</title>
        <authorList>
            <person name="Takasaki K."/>
            <person name="Ichikawa N."/>
            <person name="Miura H."/>
            <person name="Matsushita S."/>
            <person name="Watanabe Y."/>
            <person name="Oguchi A."/>
            <person name="Ankai A."/>
            <person name="Yashiro I."/>
            <person name="Takahashi M."/>
            <person name="Terui Y."/>
            <person name="Fukui S."/>
            <person name="Yokoyama H."/>
            <person name="Tanikawa S."/>
            <person name="Hanada S."/>
            <person name="Kamagata Y."/>
            <person name="Fujita N."/>
        </authorList>
    </citation>
    <scope>NUCLEOTIDE SEQUENCE [LARGE SCALE GENOMIC DNA]</scope>
    <source>
        <strain>DSM 14586 / JCM 11422 / NBRC 100505 / T-27</strain>
    </source>
</reference>
<gene>
    <name evidence="1" type="primary">rpsP</name>
    <name type="ordered locus">GAU_2334</name>
</gene>